<accession>A8H356</accession>
<protein>
    <recommendedName>
        <fullName evidence="1">Acetate kinase</fullName>
        <ecNumber evidence="1">2.7.2.1</ecNumber>
    </recommendedName>
    <alternativeName>
        <fullName evidence="1">Acetokinase</fullName>
    </alternativeName>
</protein>
<name>ACKA_SHEPA</name>
<evidence type="ECO:0000255" key="1">
    <source>
        <dbReference type="HAMAP-Rule" id="MF_00020"/>
    </source>
</evidence>
<dbReference type="EC" id="2.7.2.1" evidence="1"/>
<dbReference type="EMBL" id="CP000851">
    <property type="protein sequence ID" value="ABV86993.1"/>
    <property type="molecule type" value="Genomic_DNA"/>
</dbReference>
<dbReference type="RefSeq" id="WP_012154913.1">
    <property type="nucleotide sequence ID" value="NC_009901.1"/>
</dbReference>
<dbReference type="SMR" id="A8H356"/>
<dbReference type="STRING" id="398579.Spea_1669"/>
<dbReference type="KEGG" id="spl:Spea_1669"/>
<dbReference type="eggNOG" id="COG0282">
    <property type="taxonomic scope" value="Bacteria"/>
</dbReference>
<dbReference type="HOGENOM" id="CLU_020352_0_1_6"/>
<dbReference type="OrthoDB" id="9802453at2"/>
<dbReference type="UniPathway" id="UPA00340">
    <property type="reaction ID" value="UER00458"/>
</dbReference>
<dbReference type="Proteomes" id="UP000002608">
    <property type="component" value="Chromosome"/>
</dbReference>
<dbReference type="GO" id="GO:0005829">
    <property type="term" value="C:cytosol"/>
    <property type="evidence" value="ECO:0007669"/>
    <property type="project" value="TreeGrafter"/>
</dbReference>
<dbReference type="GO" id="GO:0008776">
    <property type="term" value="F:acetate kinase activity"/>
    <property type="evidence" value="ECO:0007669"/>
    <property type="project" value="UniProtKB-UniRule"/>
</dbReference>
<dbReference type="GO" id="GO:0005524">
    <property type="term" value="F:ATP binding"/>
    <property type="evidence" value="ECO:0007669"/>
    <property type="project" value="UniProtKB-KW"/>
</dbReference>
<dbReference type="GO" id="GO:0000287">
    <property type="term" value="F:magnesium ion binding"/>
    <property type="evidence" value="ECO:0007669"/>
    <property type="project" value="UniProtKB-UniRule"/>
</dbReference>
<dbReference type="GO" id="GO:0006083">
    <property type="term" value="P:acetate metabolic process"/>
    <property type="evidence" value="ECO:0007669"/>
    <property type="project" value="TreeGrafter"/>
</dbReference>
<dbReference type="GO" id="GO:0006085">
    <property type="term" value="P:acetyl-CoA biosynthetic process"/>
    <property type="evidence" value="ECO:0007669"/>
    <property type="project" value="UniProtKB-UniRule"/>
</dbReference>
<dbReference type="CDD" id="cd24010">
    <property type="entry name" value="ASKHA_NBD_AcK_PK"/>
    <property type="match status" value="1"/>
</dbReference>
<dbReference type="FunFam" id="3.30.420.40:FF:000041">
    <property type="entry name" value="Acetate kinase"/>
    <property type="match status" value="1"/>
</dbReference>
<dbReference type="Gene3D" id="3.30.420.40">
    <property type="match status" value="2"/>
</dbReference>
<dbReference type="HAMAP" id="MF_00020">
    <property type="entry name" value="Acetate_kinase"/>
    <property type="match status" value="1"/>
</dbReference>
<dbReference type="InterPro" id="IPR004372">
    <property type="entry name" value="Ac/propionate_kinase"/>
</dbReference>
<dbReference type="InterPro" id="IPR000890">
    <property type="entry name" value="Aliphatic_acid_kin_short-chain"/>
</dbReference>
<dbReference type="InterPro" id="IPR023865">
    <property type="entry name" value="Aliphatic_acid_kinase_CS"/>
</dbReference>
<dbReference type="InterPro" id="IPR043129">
    <property type="entry name" value="ATPase_NBD"/>
</dbReference>
<dbReference type="NCBIfam" id="TIGR00016">
    <property type="entry name" value="ackA"/>
    <property type="match status" value="1"/>
</dbReference>
<dbReference type="PANTHER" id="PTHR21060">
    <property type="entry name" value="ACETATE KINASE"/>
    <property type="match status" value="1"/>
</dbReference>
<dbReference type="PANTHER" id="PTHR21060:SF21">
    <property type="entry name" value="ACETATE KINASE"/>
    <property type="match status" value="1"/>
</dbReference>
<dbReference type="Pfam" id="PF00871">
    <property type="entry name" value="Acetate_kinase"/>
    <property type="match status" value="1"/>
</dbReference>
<dbReference type="PIRSF" id="PIRSF000722">
    <property type="entry name" value="Acetate_prop_kin"/>
    <property type="match status" value="1"/>
</dbReference>
<dbReference type="PRINTS" id="PR00471">
    <property type="entry name" value="ACETATEKNASE"/>
</dbReference>
<dbReference type="SUPFAM" id="SSF53067">
    <property type="entry name" value="Actin-like ATPase domain"/>
    <property type="match status" value="2"/>
</dbReference>
<dbReference type="PROSITE" id="PS01075">
    <property type="entry name" value="ACETATE_KINASE_1"/>
    <property type="match status" value="1"/>
</dbReference>
<dbReference type="PROSITE" id="PS01076">
    <property type="entry name" value="ACETATE_KINASE_2"/>
    <property type="match status" value="1"/>
</dbReference>
<proteinExistence type="inferred from homology"/>
<sequence>MSHKLVLVLNCGSSSLKFAVIDALTGDDQISGLAECFGLEDSRIKWKVNGQKSEASLGAFTAHREAVEYIVNDILGAHPEIAAEIQAIGHRVVHGGEKFTRSVIIDESVIHGIEDCATLAPLHNPAHLIGIRAAQASFPALPQVAVFDTAFHQTMPEKAYIYALPYKLYRENAIRRYGMHGTSHLFISREAAAALGKDEADTNIICAHLGNGASVTAIKGGKSVDTSMGLTPLEGLVMGTRCGDLDPSVIFHLVNRLGYTLDEVESVLNKQSGLLGISELTNDCRGIEEGFGSGHKGATLALEIFCYRLAKYIASYTVPLERLDAVVFTGGIGENSDLIREKVLNSLAIFNFNVDKERNAAARFGNGGQITTDEGTVAMVIPTNEEWVIAQDAIELIK</sequence>
<reference key="1">
    <citation type="submission" date="2007-10" db="EMBL/GenBank/DDBJ databases">
        <title>Complete sequence of Shewanella pealeana ATCC 700345.</title>
        <authorList>
            <consortium name="US DOE Joint Genome Institute"/>
            <person name="Copeland A."/>
            <person name="Lucas S."/>
            <person name="Lapidus A."/>
            <person name="Barry K."/>
            <person name="Glavina del Rio T."/>
            <person name="Dalin E."/>
            <person name="Tice H."/>
            <person name="Pitluck S."/>
            <person name="Chertkov O."/>
            <person name="Brettin T."/>
            <person name="Bruce D."/>
            <person name="Detter J.C."/>
            <person name="Han C."/>
            <person name="Schmutz J."/>
            <person name="Larimer F."/>
            <person name="Land M."/>
            <person name="Hauser L."/>
            <person name="Kyrpides N."/>
            <person name="Kim E."/>
            <person name="Zhao J.-S.Z."/>
            <person name="Manno D."/>
            <person name="Hawari J."/>
            <person name="Richardson P."/>
        </authorList>
    </citation>
    <scope>NUCLEOTIDE SEQUENCE [LARGE SCALE GENOMIC DNA]</scope>
    <source>
        <strain>ATCC 700345 / ANG-SQ1</strain>
    </source>
</reference>
<keyword id="KW-0067">ATP-binding</keyword>
<keyword id="KW-0963">Cytoplasm</keyword>
<keyword id="KW-0418">Kinase</keyword>
<keyword id="KW-0460">Magnesium</keyword>
<keyword id="KW-0479">Metal-binding</keyword>
<keyword id="KW-0547">Nucleotide-binding</keyword>
<keyword id="KW-1185">Reference proteome</keyword>
<keyword id="KW-0808">Transferase</keyword>
<comment type="function">
    <text evidence="1">Catalyzes the formation of acetyl phosphate from acetate and ATP. Can also catalyze the reverse reaction.</text>
</comment>
<comment type="catalytic activity">
    <reaction evidence="1">
        <text>acetate + ATP = acetyl phosphate + ADP</text>
        <dbReference type="Rhea" id="RHEA:11352"/>
        <dbReference type="ChEBI" id="CHEBI:22191"/>
        <dbReference type="ChEBI" id="CHEBI:30089"/>
        <dbReference type="ChEBI" id="CHEBI:30616"/>
        <dbReference type="ChEBI" id="CHEBI:456216"/>
        <dbReference type="EC" id="2.7.2.1"/>
    </reaction>
</comment>
<comment type="cofactor">
    <cofactor evidence="1">
        <name>Mg(2+)</name>
        <dbReference type="ChEBI" id="CHEBI:18420"/>
    </cofactor>
    <cofactor evidence="1">
        <name>Mn(2+)</name>
        <dbReference type="ChEBI" id="CHEBI:29035"/>
    </cofactor>
    <text evidence="1">Mg(2+). Can also accept Mn(2+).</text>
</comment>
<comment type="pathway">
    <text evidence="1">Metabolic intermediate biosynthesis; acetyl-CoA biosynthesis; acetyl-CoA from acetate: step 1/2.</text>
</comment>
<comment type="subunit">
    <text evidence="1">Homodimer.</text>
</comment>
<comment type="subcellular location">
    <subcellularLocation>
        <location evidence="1">Cytoplasm</location>
    </subcellularLocation>
</comment>
<comment type="similarity">
    <text evidence="1">Belongs to the acetokinase family.</text>
</comment>
<organism>
    <name type="scientific">Shewanella pealeana (strain ATCC 700345 / ANG-SQ1)</name>
    <dbReference type="NCBI Taxonomy" id="398579"/>
    <lineage>
        <taxon>Bacteria</taxon>
        <taxon>Pseudomonadati</taxon>
        <taxon>Pseudomonadota</taxon>
        <taxon>Gammaproteobacteria</taxon>
        <taxon>Alteromonadales</taxon>
        <taxon>Shewanellaceae</taxon>
        <taxon>Shewanella</taxon>
    </lineage>
</organism>
<feature type="chain" id="PRO_1000074190" description="Acetate kinase">
    <location>
        <begin position="1"/>
        <end position="398"/>
    </location>
</feature>
<feature type="active site" description="Proton donor/acceptor" evidence="1">
    <location>
        <position position="148"/>
    </location>
</feature>
<feature type="binding site" evidence="1">
    <location>
        <position position="10"/>
    </location>
    <ligand>
        <name>Mg(2+)</name>
        <dbReference type="ChEBI" id="CHEBI:18420"/>
    </ligand>
</feature>
<feature type="binding site" evidence="1">
    <location>
        <position position="17"/>
    </location>
    <ligand>
        <name>ATP</name>
        <dbReference type="ChEBI" id="CHEBI:30616"/>
    </ligand>
</feature>
<feature type="binding site" evidence="1">
    <location>
        <position position="91"/>
    </location>
    <ligand>
        <name>substrate</name>
    </ligand>
</feature>
<feature type="binding site" evidence="1">
    <location>
        <begin position="208"/>
        <end position="212"/>
    </location>
    <ligand>
        <name>ATP</name>
        <dbReference type="ChEBI" id="CHEBI:30616"/>
    </ligand>
</feature>
<feature type="binding site" evidence="1">
    <location>
        <begin position="283"/>
        <end position="285"/>
    </location>
    <ligand>
        <name>ATP</name>
        <dbReference type="ChEBI" id="CHEBI:30616"/>
    </ligand>
</feature>
<feature type="binding site" evidence="1">
    <location>
        <begin position="331"/>
        <end position="335"/>
    </location>
    <ligand>
        <name>ATP</name>
        <dbReference type="ChEBI" id="CHEBI:30616"/>
    </ligand>
</feature>
<feature type="binding site" evidence="1">
    <location>
        <position position="385"/>
    </location>
    <ligand>
        <name>Mg(2+)</name>
        <dbReference type="ChEBI" id="CHEBI:18420"/>
    </ligand>
</feature>
<feature type="site" description="Transition state stabilizer" evidence="1">
    <location>
        <position position="180"/>
    </location>
</feature>
<feature type="site" description="Transition state stabilizer" evidence="1">
    <location>
        <position position="241"/>
    </location>
</feature>
<gene>
    <name evidence="1" type="primary">ackA</name>
    <name type="ordered locus">Spea_1669</name>
</gene>